<name>PLSY_HELPY</name>
<gene>
    <name evidence="1" type="primary">plsY</name>
    <name type="ordered locus">HP_1509</name>
</gene>
<protein>
    <recommendedName>
        <fullName evidence="1">Glycerol-3-phosphate acyltransferase</fullName>
    </recommendedName>
    <alternativeName>
        <fullName evidence="1">Acyl-PO4 G3P acyltransferase</fullName>
    </alternativeName>
    <alternativeName>
        <fullName evidence="1">Acyl-phosphate--glycerol-3-phosphate acyltransferase</fullName>
    </alternativeName>
    <alternativeName>
        <fullName evidence="1">G3P acyltransferase</fullName>
        <shortName evidence="1">GPAT</shortName>
        <ecNumber evidence="1">2.3.1.275</ecNumber>
    </alternativeName>
    <alternativeName>
        <fullName evidence="1">Lysophosphatidic acid synthase</fullName>
        <shortName evidence="1">LPA synthase</shortName>
    </alternativeName>
</protein>
<evidence type="ECO:0000255" key="1">
    <source>
        <dbReference type="HAMAP-Rule" id="MF_01043"/>
    </source>
</evidence>
<evidence type="ECO:0000305" key="2"/>
<proteinExistence type="inferred from homology"/>
<accession>O26039</accession>
<reference key="1">
    <citation type="journal article" date="1997" name="Nature">
        <title>The complete genome sequence of the gastric pathogen Helicobacter pylori.</title>
        <authorList>
            <person name="Tomb J.-F."/>
            <person name="White O."/>
            <person name="Kerlavage A.R."/>
            <person name="Clayton R.A."/>
            <person name="Sutton G.G."/>
            <person name="Fleischmann R.D."/>
            <person name="Ketchum K.A."/>
            <person name="Klenk H.-P."/>
            <person name="Gill S.R."/>
            <person name="Dougherty B.A."/>
            <person name="Nelson K.E."/>
            <person name="Quackenbush J."/>
            <person name="Zhou L."/>
            <person name="Kirkness E.F."/>
            <person name="Peterson S.N."/>
            <person name="Loftus B.J."/>
            <person name="Richardson D.L."/>
            <person name="Dodson R.J."/>
            <person name="Khalak H.G."/>
            <person name="Glodek A."/>
            <person name="McKenney K."/>
            <person name="FitzGerald L.M."/>
            <person name="Lee N."/>
            <person name="Adams M.D."/>
            <person name="Hickey E.K."/>
            <person name="Berg D.E."/>
            <person name="Gocayne J.D."/>
            <person name="Utterback T.R."/>
            <person name="Peterson J.D."/>
            <person name="Kelley J.M."/>
            <person name="Cotton M.D."/>
            <person name="Weidman J.F."/>
            <person name="Fujii C."/>
            <person name="Bowman C."/>
            <person name="Watthey L."/>
            <person name="Wallin E."/>
            <person name="Hayes W.S."/>
            <person name="Borodovsky M."/>
            <person name="Karp P.D."/>
            <person name="Smith H.O."/>
            <person name="Fraser C.M."/>
            <person name="Venter J.C."/>
        </authorList>
    </citation>
    <scope>NUCLEOTIDE SEQUENCE [LARGE SCALE GENOMIC DNA]</scope>
    <source>
        <strain>ATCC 700392 / 26695</strain>
    </source>
</reference>
<dbReference type="EC" id="2.3.1.275" evidence="1"/>
<dbReference type="EMBL" id="AE000511">
    <property type="protein sequence ID" value="AAD08551.1"/>
    <property type="status" value="ALT_INIT"/>
    <property type="molecule type" value="Genomic_DNA"/>
</dbReference>
<dbReference type="PIR" id="E64708">
    <property type="entry name" value="E64708"/>
</dbReference>
<dbReference type="RefSeq" id="NP_208300.1">
    <property type="nucleotide sequence ID" value="NC_000915.1"/>
</dbReference>
<dbReference type="RefSeq" id="WP_000446716.1">
    <property type="nucleotide sequence ID" value="NC_018939.1"/>
</dbReference>
<dbReference type="SMR" id="O26039"/>
<dbReference type="FunCoup" id="O26039">
    <property type="interactions" value="150"/>
</dbReference>
<dbReference type="STRING" id="85962.HP_1509"/>
<dbReference type="PaxDb" id="85962-C694_07815"/>
<dbReference type="EnsemblBacteria" id="AAD08551">
    <property type="protein sequence ID" value="AAD08551"/>
    <property type="gene ID" value="HP_1509"/>
</dbReference>
<dbReference type="KEGG" id="heo:C694_07815"/>
<dbReference type="KEGG" id="hpy:HP_1509"/>
<dbReference type="PATRIC" id="fig|85962.47.peg.1622"/>
<dbReference type="eggNOG" id="COG0344">
    <property type="taxonomic scope" value="Bacteria"/>
</dbReference>
<dbReference type="InParanoid" id="O26039"/>
<dbReference type="OrthoDB" id="9777124at2"/>
<dbReference type="PhylomeDB" id="O26039"/>
<dbReference type="UniPathway" id="UPA00085"/>
<dbReference type="Proteomes" id="UP000000429">
    <property type="component" value="Chromosome"/>
</dbReference>
<dbReference type="GO" id="GO:0005886">
    <property type="term" value="C:plasma membrane"/>
    <property type="evidence" value="ECO:0000318"/>
    <property type="project" value="GO_Central"/>
</dbReference>
<dbReference type="GO" id="GO:0043772">
    <property type="term" value="F:acyl-phosphate glycerol-3-phosphate acyltransferase activity"/>
    <property type="evidence" value="ECO:0007669"/>
    <property type="project" value="UniProtKB-UniRule"/>
</dbReference>
<dbReference type="GO" id="GO:0008654">
    <property type="term" value="P:phospholipid biosynthetic process"/>
    <property type="evidence" value="ECO:0007669"/>
    <property type="project" value="UniProtKB-UniRule"/>
</dbReference>
<dbReference type="HAMAP" id="MF_01043">
    <property type="entry name" value="PlsY"/>
    <property type="match status" value="1"/>
</dbReference>
<dbReference type="InterPro" id="IPR003811">
    <property type="entry name" value="G3P_acylTferase_PlsY"/>
</dbReference>
<dbReference type="NCBIfam" id="TIGR00023">
    <property type="entry name" value="glycerol-3-phosphate 1-O-acyltransferase PlsY"/>
    <property type="match status" value="1"/>
</dbReference>
<dbReference type="PANTHER" id="PTHR30309:SF0">
    <property type="entry name" value="GLYCEROL-3-PHOSPHATE ACYLTRANSFERASE-RELATED"/>
    <property type="match status" value="1"/>
</dbReference>
<dbReference type="PANTHER" id="PTHR30309">
    <property type="entry name" value="INNER MEMBRANE PROTEIN YGIH"/>
    <property type="match status" value="1"/>
</dbReference>
<dbReference type="Pfam" id="PF02660">
    <property type="entry name" value="G3P_acyltransf"/>
    <property type="match status" value="1"/>
</dbReference>
<dbReference type="SMART" id="SM01207">
    <property type="entry name" value="G3P_acyltransf"/>
    <property type="match status" value="1"/>
</dbReference>
<keyword id="KW-0997">Cell inner membrane</keyword>
<keyword id="KW-1003">Cell membrane</keyword>
<keyword id="KW-0444">Lipid biosynthesis</keyword>
<keyword id="KW-0443">Lipid metabolism</keyword>
<keyword id="KW-0472">Membrane</keyword>
<keyword id="KW-0594">Phospholipid biosynthesis</keyword>
<keyword id="KW-1208">Phospholipid metabolism</keyword>
<keyword id="KW-1185">Reference proteome</keyword>
<keyword id="KW-0808">Transferase</keyword>
<keyword id="KW-0812">Transmembrane</keyword>
<keyword id="KW-1133">Transmembrane helix</keyword>
<sequence>MESVLNFLTNINVIFTLLGYLIGGIPFGYALMKIFYGMDITKIGSGGIGATNVLRALQSKGVSNAKQMALLVLILDLFKGMFAVFLSKLFGLDYSLQWMVAIASILGHCYSPFLNFNGGKGVSTIMGSVVLLIPIESLIGLTVWFFVGKVLKISSLASILGVGTATVLIFFVPYMHIPDSVNILKEVGTQTPMVLIFIFTLIKHAGNIFNLLAGKEKKVL</sequence>
<comment type="function">
    <text evidence="1">Catalyzes the transfer of an acyl group from acyl-phosphate (acyl-PO(4)) to glycerol-3-phosphate (G3P) to form lysophosphatidic acid (LPA). This enzyme utilizes acyl-phosphate as fatty acyl donor, but not acyl-CoA or acyl-ACP.</text>
</comment>
<comment type="catalytic activity">
    <reaction evidence="1">
        <text>an acyl phosphate + sn-glycerol 3-phosphate = a 1-acyl-sn-glycero-3-phosphate + phosphate</text>
        <dbReference type="Rhea" id="RHEA:34075"/>
        <dbReference type="ChEBI" id="CHEBI:43474"/>
        <dbReference type="ChEBI" id="CHEBI:57597"/>
        <dbReference type="ChEBI" id="CHEBI:57970"/>
        <dbReference type="ChEBI" id="CHEBI:59918"/>
        <dbReference type="EC" id="2.3.1.275"/>
    </reaction>
</comment>
<comment type="pathway">
    <text evidence="1">Lipid metabolism; phospholipid metabolism.</text>
</comment>
<comment type="subunit">
    <text evidence="1">Probably interacts with PlsX.</text>
</comment>
<comment type="subcellular location">
    <subcellularLocation>
        <location evidence="1">Cell inner membrane</location>
        <topology evidence="1">Multi-pass membrane protein</topology>
    </subcellularLocation>
</comment>
<comment type="similarity">
    <text evidence="1">Belongs to the PlsY family.</text>
</comment>
<comment type="sequence caution" evidence="2">
    <conflict type="erroneous initiation">
        <sequence resource="EMBL-CDS" id="AAD08551"/>
    </conflict>
</comment>
<organism>
    <name type="scientific">Helicobacter pylori (strain ATCC 700392 / 26695)</name>
    <name type="common">Campylobacter pylori</name>
    <dbReference type="NCBI Taxonomy" id="85962"/>
    <lineage>
        <taxon>Bacteria</taxon>
        <taxon>Pseudomonadati</taxon>
        <taxon>Campylobacterota</taxon>
        <taxon>Epsilonproteobacteria</taxon>
        <taxon>Campylobacterales</taxon>
        <taxon>Helicobacteraceae</taxon>
        <taxon>Helicobacter</taxon>
    </lineage>
</organism>
<feature type="chain" id="PRO_0000188381" description="Glycerol-3-phosphate acyltransferase">
    <location>
        <begin position="1"/>
        <end position="220"/>
    </location>
</feature>
<feature type="transmembrane region" description="Helical" evidence="1">
    <location>
        <begin position="11"/>
        <end position="31"/>
    </location>
</feature>
<feature type="transmembrane region" description="Helical" evidence="1">
    <location>
        <begin position="70"/>
        <end position="90"/>
    </location>
</feature>
<feature type="transmembrane region" description="Helical" evidence="1">
    <location>
        <begin position="96"/>
        <end position="116"/>
    </location>
</feature>
<feature type="transmembrane region" description="Helical" evidence="1">
    <location>
        <begin position="127"/>
        <end position="147"/>
    </location>
</feature>
<feature type="transmembrane region" description="Helical" evidence="1">
    <location>
        <begin position="153"/>
        <end position="173"/>
    </location>
</feature>
<feature type="transmembrane region" description="Helical" evidence="1">
    <location>
        <begin position="193"/>
        <end position="213"/>
    </location>
</feature>